<organism>
    <name type="scientific">Alteromonas mediterranea (strain DSM 17117 / CIP 110805 / LMG 28347 / Deep ecotype)</name>
    <dbReference type="NCBI Taxonomy" id="1774373"/>
    <lineage>
        <taxon>Bacteria</taxon>
        <taxon>Pseudomonadati</taxon>
        <taxon>Pseudomonadota</taxon>
        <taxon>Gammaproteobacteria</taxon>
        <taxon>Alteromonadales</taxon>
        <taxon>Alteromonadaceae</taxon>
        <taxon>Alteromonas/Salinimonas group</taxon>
        <taxon>Alteromonas</taxon>
    </lineage>
</organism>
<reference key="1">
    <citation type="journal article" date="2008" name="ISME J.">
        <title>Comparative genomics of two ecotypes of the marine planktonic copiotroph Alteromonas macleodii suggests alternative lifestyles associated with different kinds of particulate organic matter.</title>
        <authorList>
            <person name="Ivars-Martinez E."/>
            <person name="Martin-Cuadrado A.-B."/>
            <person name="D'Auria G."/>
            <person name="Mira A."/>
            <person name="Ferriera S."/>
            <person name="Johnson J."/>
            <person name="Friedman R."/>
            <person name="Rodriguez-Valera F."/>
        </authorList>
    </citation>
    <scope>NUCLEOTIDE SEQUENCE [LARGE SCALE GENOMIC DNA]</scope>
    <source>
        <strain>DSM 17117 / CIP 110805 / LMG 28347 / Deep ecotype</strain>
    </source>
</reference>
<name>PIMT_ALTMD</name>
<gene>
    <name evidence="1" type="primary">pcm</name>
    <name type="ordered locus">MADE_1003370</name>
</gene>
<feature type="chain" id="PRO_1000093249" description="Protein-L-isoaspartate O-methyltransferase">
    <location>
        <begin position="1"/>
        <end position="211"/>
    </location>
</feature>
<feature type="active site" evidence="1">
    <location>
        <position position="60"/>
    </location>
</feature>
<accession>B4RZG8</accession>
<accession>F2G8C1</accession>
<sequence>MRASRKGDALAQLLYNEGIRSQAVLNAIAGTPRESFLPDALKHKAYQNTALPIGQGQTISQPYIVAKMTELLLDSPNKPEKVLEIGTGSGYQTAILAQLFAKVFSVERIKTLQFQAKRRMNQLDLHNIAMKHGDGWKGWASKGPYDAIIVTAAAASLPQDLCDQLKEGGRLIIPVGNEQQSLLCIDRIEGELKTSTIESVRFVPLVAGELM</sequence>
<proteinExistence type="inferred from homology"/>
<keyword id="KW-0963">Cytoplasm</keyword>
<keyword id="KW-0489">Methyltransferase</keyword>
<keyword id="KW-0949">S-adenosyl-L-methionine</keyword>
<keyword id="KW-0808">Transferase</keyword>
<comment type="function">
    <text evidence="1">Catalyzes the methyl esterification of L-isoaspartyl residues in peptides and proteins that result from spontaneous decomposition of normal L-aspartyl and L-asparaginyl residues. It plays a role in the repair and/or degradation of damaged proteins.</text>
</comment>
<comment type="catalytic activity">
    <reaction evidence="1">
        <text>[protein]-L-isoaspartate + S-adenosyl-L-methionine = [protein]-L-isoaspartate alpha-methyl ester + S-adenosyl-L-homocysteine</text>
        <dbReference type="Rhea" id="RHEA:12705"/>
        <dbReference type="Rhea" id="RHEA-COMP:12143"/>
        <dbReference type="Rhea" id="RHEA-COMP:12144"/>
        <dbReference type="ChEBI" id="CHEBI:57856"/>
        <dbReference type="ChEBI" id="CHEBI:59789"/>
        <dbReference type="ChEBI" id="CHEBI:90596"/>
        <dbReference type="ChEBI" id="CHEBI:90598"/>
        <dbReference type="EC" id="2.1.1.77"/>
    </reaction>
</comment>
<comment type="subcellular location">
    <subcellularLocation>
        <location evidence="1">Cytoplasm</location>
    </subcellularLocation>
</comment>
<comment type="similarity">
    <text evidence="1">Belongs to the methyltransferase superfamily. L-isoaspartyl/D-aspartyl protein methyltransferase family.</text>
</comment>
<protein>
    <recommendedName>
        <fullName evidence="1">Protein-L-isoaspartate O-methyltransferase</fullName>
        <ecNumber evidence="1">2.1.1.77</ecNumber>
    </recommendedName>
    <alternativeName>
        <fullName evidence="1">L-isoaspartyl protein carboxyl methyltransferase</fullName>
    </alternativeName>
    <alternativeName>
        <fullName evidence="1">Protein L-isoaspartyl methyltransferase</fullName>
    </alternativeName>
    <alternativeName>
        <fullName evidence="1">Protein-beta-aspartate methyltransferase</fullName>
        <shortName evidence="1">PIMT</shortName>
    </alternativeName>
</protein>
<evidence type="ECO:0000255" key="1">
    <source>
        <dbReference type="HAMAP-Rule" id="MF_00090"/>
    </source>
</evidence>
<dbReference type="EC" id="2.1.1.77" evidence="1"/>
<dbReference type="EMBL" id="CP001103">
    <property type="protein sequence ID" value="AEA96822.1"/>
    <property type="molecule type" value="Genomic_DNA"/>
</dbReference>
<dbReference type="RefSeq" id="WP_012517176.1">
    <property type="nucleotide sequence ID" value="NC_011138.3"/>
</dbReference>
<dbReference type="SMR" id="B4RZG8"/>
<dbReference type="KEGG" id="amc:MADE_1003370"/>
<dbReference type="HOGENOM" id="CLU_055432_2_0_6"/>
<dbReference type="Proteomes" id="UP000001870">
    <property type="component" value="Chromosome"/>
</dbReference>
<dbReference type="GO" id="GO:0005737">
    <property type="term" value="C:cytoplasm"/>
    <property type="evidence" value="ECO:0007669"/>
    <property type="project" value="UniProtKB-SubCell"/>
</dbReference>
<dbReference type="GO" id="GO:0004719">
    <property type="term" value="F:protein-L-isoaspartate (D-aspartate) O-methyltransferase activity"/>
    <property type="evidence" value="ECO:0007669"/>
    <property type="project" value="UniProtKB-UniRule"/>
</dbReference>
<dbReference type="GO" id="GO:0032259">
    <property type="term" value="P:methylation"/>
    <property type="evidence" value="ECO:0007669"/>
    <property type="project" value="UniProtKB-KW"/>
</dbReference>
<dbReference type="GO" id="GO:0036211">
    <property type="term" value="P:protein modification process"/>
    <property type="evidence" value="ECO:0007669"/>
    <property type="project" value="UniProtKB-UniRule"/>
</dbReference>
<dbReference type="GO" id="GO:0030091">
    <property type="term" value="P:protein repair"/>
    <property type="evidence" value="ECO:0007669"/>
    <property type="project" value="UniProtKB-UniRule"/>
</dbReference>
<dbReference type="CDD" id="cd02440">
    <property type="entry name" value="AdoMet_MTases"/>
    <property type="match status" value="1"/>
</dbReference>
<dbReference type="FunFam" id="3.40.50.150:FF:000010">
    <property type="entry name" value="Protein-L-isoaspartate O-methyltransferase"/>
    <property type="match status" value="1"/>
</dbReference>
<dbReference type="Gene3D" id="3.40.50.150">
    <property type="entry name" value="Vaccinia Virus protein VP39"/>
    <property type="match status" value="1"/>
</dbReference>
<dbReference type="HAMAP" id="MF_00090">
    <property type="entry name" value="PIMT"/>
    <property type="match status" value="1"/>
</dbReference>
<dbReference type="InterPro" id="IPR000682">
    <property type="entry name" value="PCMT"/>
</dbReference>
<dbReference type="InterPro" id="IPR029063">
    <property type="entry name" value="SAM-dependent_MTases_sf"/>
</dbReference>
<dbReference type="NCBIfam" id="TIGR00080">
    <property type="entry name" value="pimt"/>
    <property type="match status" value="1"/>
</dbReference>
<dbReference type="NCBIfam" id="NF001453">
    <property type="entry name" value="PRK00312.1"/>
    <property type="match status" value="1"/>
</dbReference>
<dbReference type="PANTHER" id="PTHR11579">
    <property type="entry name" value="PROTEIN-L-ISOASPARTATE O-METHYLTRANSFERASE"/>
    <property type="match status" value="1"/>
</dbReference>
<dbReference type="PANTHER" id="PTHR11579:SF0">
    <property type="entry name" value="PROTEIN-L-ISOASPARTATE(D-ASPARTATE) O-METHYLTRANSFERASE"/>
    <property type="match status" value="1"/>
</dbReference>
<dbReference type="Pfam" id="PF01135">
    <property type="entry name" value="PCMT"/>
    <property type="match status" value="1"/>
</dbReference>
<dbReference type="SUPFAM" id="SSF53335">
    <property type="entry name" value="S-adenosyl-L-methionine-dependent methyltransferases"/>
    <property type="match status" value="1"/>
</dbReference>
<dbReference type="PROSITE" id="PS01279">
    <property type="entry name" value="PCMT"/>
    <property type="match status" value="1"/>
</dbReference>